<dbReference type="EMBL" id="AM263198">
    <property type="protein sequence ID" value="CAK19462.1"/>
    <property type="molecule type" value="Genomic_DNA"/>
</dbReference>
<dbReference type="RefSeq" id="WP_011700919.1">
    <property type="nucleotide sequence ID" value="NC_008555.1"/>
</dbReference>
<dbReference type="SMR" id="A0AEN0"/>
<dbReference type="STRING" id="386043.lwe0044"/>
<dbReference type="GeneID" id="61187927"/>
<dbReference type="KEGG" id="lwe:lwe0044"/>
<dbReference type="eggNOG" id="COG0359">
    <property type="taxonomic scope" value="Bacteria"/>
</dbReference>
<dbReference type="HOGENOM" id="CLU_078938_3_2_9"/>
<dbReference type="OrthoDB" id="9788336at2"/>
<dbReference type="Proteomes" id="UP000000779">
    <property type="component" value="Chromosome"/>
</dbReference>
<dbReference type="GO" id="GO:1990904">
    <property type="term" value="C:ribonucleoprotein complex"/>
    <property type="evidence" value="ECO:0007669"/>
    <property type="project" value="UniProtKB-KW"/>
</dbReference>
<dbReference type="GO" id="GO:0005840">
    <property type="term" value="C:ribosome"/>
    <property type="evidence" value="ECO:0007669"/>
    <property type="project" value="UniProtKB-KW"/>
</dbReference>
<dbReference type="GO" id="GO:0019843">
    <property type="term" value="F:rRNA binding"/>
    <property type="evidence" value="ECO:0007669"/>
    <property type="project" value="UniProtKB-UniRule"/>
</dbReference>
<dbReference type="GO" id="GO:0003735">
    <property type="term" value="F:structural constituent of ribosome"/>
    <property type="evidence" value="ECO:0007669"/>
    <property type="project" value="InterPro"/>
</dbReference>
<dbReference type="GO" id="GO:0006412">
    <property type="term" value="P:translation"/>
    <property type="evidence" value="ECO:0007669"/>
    <property type="project" value="UniProtKB-UniRule"/>
</dbReference>
<dbReference type="FunFam" id="3.10.430.100:FF:000002">
    <property type="entry name" value="50S ribosomal protein L9"/>
    <property type="match status" value="1"/>
</dbReference>
<dbReference type="FunFam" id="3.40.5.10:FF:000002">
    <property type="entry name" value="50S ribosomal protein L9"/>
    <property type="match status" value="1"/>
</dbReference>
<dbReference type="Gene3D" id="3.10.430.100">
    <property type="entry name" value="Ribosomal protein L9, C-terminal domain"/>
    <property type="match status" value="1"/>
</dbReference>
<dbReference type="Gene3D" id="3.40.5.10">
    <property type="entry name" value="Ribosomal protein L9, N-terminal domain"/>
    <property type="match status" value="1"/>
</dbReference>
<dbReference type="HAMAP" id="MF_00503">
    <property type="entry name" value="Ribosomal_bL9"/>
    <property type="match status" value="1"/>
</dbReference>
<dbReference type="InterPro" id="IPR000244">
    <property type="entry name" value="Ribosomal_bL9"/>
</dbReference>
<dbReference type="InterPro" id="IPR009027">
    <property type="entry name" value="Ribosomal_bL9/RNase_H1_N"/>
</dbReference>
<dbReference type="InterPro" id="IPR020594">
    <property type="entry name" value="Ribosomal_bL9_bac/chp"/>
</dbReference>
<dbReference type="InterPro" id="IPR020069">
    <property type="entry name" value="Ribosomal_bL9_C"/>
</dbReference>
<dbReference type="InterPro" id="IPR036791">
    <property type="entry name" value="Ribosomal_bL9_C_sf"/>
</dbReference>
<dbReference type="InterPro" id="IPR020070">
    <property type="entry name" value="Ribosomal_bL9_N"/>
</dbReference>
<dbReference type="InterPro" id="IPR036935">
    <property type="entry name" value="Ribosomal_bL9_N_sf"/>
</dbReference>
<dbReference type="NCBIfam" id="TIGR00158">
    <property type="entry name" value="L9"/>
    <property type="match status" value="1"/>
</dbReference>
<dbReference type="PANTHER" id="PTHR21368">
    <property type="entry name" value="50S RIBOSOMAL PROTEIN L9"/>
    <property type="match status" value="1"/>
</dbReference>
<dbReference type="Pfam" id="PF03948">
    <property type="entry name" value="Ribosomal_L9_C"/>
    <property type="match status" value="1"/>
</dbReference>
<dbReference type="Pfam" id="PF01281">
    <property type="entry name" value="Ribosomal_L9_N"/>
    <property type="match status" value="1"/>
</dbReference>
<dbReference type="SUPFAM" id="SSF55658">
    <property type="entry name" value="L9 N-domain-like"/>
    <property type="match status" value="1"/>
</dbReference>
<dbReference type="SUPFAM" id="SSF55653">
    <property type="entry name" value="Ribosomal protein L9 C-domain"/>
    <property type="match status" value="1"/>
</dbReference>
<dbReference type="PROSITE" id="PS00651">
    <property type="entry name" value="RIBOSOMAL_L9"/>
    <property type="match status" value="1"/>
</dbReference>
<keyword id="KW-0687">Ribonucleoprotein</keyword>
<keyword id="KW-0689">Ribosomal protein</keyword>
<keyword id="KW-0694">RNA-binding</keyword>
<keyword id="KW-0699">rRNA-binding</keyword>
<feature type="chain" id="PRO_1000014804" description="Large ribosomal subunit protein bL9">
    <location>
        <begin position="1"/>
        <end position="148"/>
    </location>
</feature>
<name>RL9_LISW6</name>
<proteinExistence type="inferred from homology"/>
<comment type="function">
    <text evidence="1">Binds to the 23S rRNA.</text>
</comment>
<comment type="similarity">
    <text evidence="1">Belongs to the bacterial ribosomal protein bL9 family.</text>
</comment>
<accession>A0AEN0</accession>
<gene>
    <name evidence="1" type="primary">rplI</name>
    <name type="ordered locus">lwe0044</name>
</gene>
<protein>
    <recommendedName>
        <fullName evidence="1">Large ribosomal subunit protein bL9</fullName>
    </recommendedName>
    <alternativeName>
        <fullName evidence="2">50S ribosomal protein L9</fullName>
    </alternativeName>
</protein>
<evidence type="ECO:0000255" key="1">
    <source>
        <dbReference type="HAMAP-Rule" id="MF_00503"/>
    </source>
</evidence>
<evidence type="ECO:0000305" key="2"/>
<sequence length="148" mass="16151">MKVIFLKDVKGKGKKGETKNVADGYANNFLIKNGYAVEASNAALSTLSAQKKKEDKLAAEELAEAKALKEKMEKLTVELKAKSGEGGRLFGSITSKQIAQTLEKTHGIKIDKRKMDLPEAIRALGHTKVPVKLHHEVTATLDVHVSEE</sequence>
<organism>
    <name type="scientific">Listeria welshimeri serovar 6b (strain ATCC 35897 / DSM 20650 / CCUG 15529 / CIP 8149 / NCTC 11857 / SLCC 5334 / V8)</name>
    <dbReference type="NCBI Taxonomy" id="386043"/>
    <lineage>
        <taxon>Bacteria</taxon>
        <taxon>Bacillati</taxon>
        <taxon>Bacillota</taxon>
        <taxon>Bacilli</taxon>
        <taxon>Bacillales</taxon>
        <taxon>Listeriaceae</taxon>
        <taxon>Listeria</taxon>
    </lineage>
</organism>
<reference key="1">
    <citation type="journal article" date="2006" name="J. Bacteriol.">
        <title>Whole-genome sequence of Listeria welshimeri reveals common steps in genome reduction with Listeria innocua as compared to Listeria monocytogenes.</title>
        <authorList>
            <person name="Hain T."/>
            <person name="Steinweg C."/>
            <person name="Kuenne C.T."/>
            <person name="Billion A."/>
            <person name="Ghai R."/>
            <person name="Chatterjee S.S."/>
            <person name="Domann E."/>
            <person name="Kaerst U."/>
            <person name="Goesmann A."/>
            <person name="Bekel T."/>
            <person name="Bartels D."/>
            <person name="Kaiser O."/>
            <person name="Meyer F."/>
            <person name="Puehler A."/>
            <person name="Weisshaar B."/>
            <person name="Wehland J."/>
            <person name="Liang C."/>
            <person name="Dandekar T."/>
            <person name="Lampidis R."/>
            <person name="Kreft J."/>
            <person name="Goebel W."/>
            <person name="Chakraborty T."/>
        </authorList>
    </citation>
    <scope>NUCLEOTIDE SEQUENCE [LARGE SCALE GENOMIC DNA]</scope>
    <source>
        <strain>ATCC 35897 / DSM 20650 / CCUG 15529 / CIP 8149 / NCTC 11857 / SLCC 5334 / V8</strain>
    </source>
</reference>